<comment type="similarity">
    <text evidence="1">Belongs to the universal ribosomal protein uL29 family.</text>
</comment>
<gene>
    <name evidence="1" type="primary">rpmC</name>
    <name type="ordered locus">HPSH_06780</name>
</gene>
<proteinExistence type="inferred from homology"/>
<evidence type="ECO:0000255" key="1">
    <source>
        <dbReference type="HAMAP-Rule" id="MF_00374"/>
    </source>
</evidence>
<evidence type="ECO:0000305" key="2"/>
<feature type="chain" id="PRO_1000121779" description="Large ribosomal subunit protein uL29">
    <location>
        <begin position="1"/>
        <end position="66"/>
    </location>
</feature>
<dbReference type="EMBL" id="CP001072">
    <property type="protein sequence ID" value="ACD48756.1"/>
    <property type="molecule type" value="Genomic_DNA"/>
</dbReference>
<dbReference type="RefSeq" id="WP_000877874.1">
    <property type="nucleotide sequence ID" value="NC_010698.2"/>
</dbReference>
<dbReference type="SMR" id="B2UV74"/>
<dbReference type="KEGG" id="hps:HPSH_06780"/>
<dbReference type="HOGENOM" id="CLU_158491_7_1_7"/>
<dbReference type="GO" id="GO:0022625">
    <property type="term" value="C:cytosolic large ribosomal subunit"/>
    <property type="evidence" value="ECO:0007669"/>
    <property type="project" value="TreeGrafter"/>
</dbReference>
<dbReference type="GO" id="GO:0003735">
    <property type="term" value="F:structural constituent of ribosome"/>
    <property type="evidence" value="ECO:0007669"/>
    <property type="project" value="InterPro"/>
</dbReference>
<dbReference type="GO" id="GO:0006412">
    <property type="term" value="P:translation"/>
    <property type="evidence" value="ECO:0007669"/>
    <property type="project" value="UniProtKB-UniRule"/>
</dbReference>
<dbReference type="CDD" id="cd00427">
    <property type="entry name" value="Ribosomal_L29_HIP"/>
    <property type="match status" value="1"/>
</dbReference>
<dbReference type="Gene3D" id="1.10.287.310">
    <property type="match status" value="1"/>
</dbReference>
<dbReference type="HAMAP" id="MF_00374">
    <property type="entry name" value="Ribosomal_uL29"/>
    <property type="match status" value="1"/>
</dbReference>
<dbReference type="InterPro" id="IPR050063">
    <property type="entry name" value="Ribosomal_protein_uL29"/>
</dbReference>
<dbReference type="InterPro" id="IPR001854">
    <property type="entry name" value="Ribosomal_uL29"/>
</dbReference>
<dbReference type="InterPro" id="IPR018254">
    <property type="entry name" value="Ribosomal_uL29_CS"/>
</dbReference>
<dbReference type="InterPro" id="IPR036049">
    <property type="entry name" value="Ribosomal_uL29_sf"/>
</dbReference>
<dbReference type="NCBIfam" id="TIGR00012">
    <property type="entry name" value="L29"/>
    <property type="match status" value="1"/>
</dbReference>
<dbReference type="PANTHER" id="PTHR10916">
    <property type="entry name" value="60S RIBOSOMAL PROTEIN L35/50S RIBOSOMAL PROTEIN L29"/>
    <property type="match status" value="1"/>
</dbReference>
<dbReference type="PANTHER" id="PTHR10916:SF0">
    <property type="entry name" value="LARGE RIBOSOMAL SUBUNIT PROTEIN UL29C"/>
    <property type="match status" value="1"/>
</dbReference>
<dbReference type="Pfam" id="PF00831">
    <property type="entry name" value="Ribosomal_L29"/>
    <property type="match status" value="1"/>
</dbReference>
<dbReference type="SUPFAM" id="SSF46561">
    <property type="entry name" value="Ribosomal protein L29 (L29p)"/>
    <property type="match status" value="1"/>
</dbReference>
<dbReference type="PROSITE" id="PS00579">
    <property type="entry name" value="RIBOSOMAL_L29"/>
    <property type="match status" value="1"/>
</dbReference>
<sequence>MKYTELKDKSIKELEELLHAKKAELFELHVKLKAMQLSNPNEIKKARRNIARINTAINAYYSSSVE</sequence>
<name>RL29_HELPS</name>
<protein>
    <recommendedName>
        <fullName evidence="1">Large ribosomal subunit protein uL29</fullName>
    </recommendedName>
    <alternativeName>
        <fullName evidence="2">50S ribosomal protein L29</fullName>
    </alternativeName>
</protein>
<accession>B2UV74</accession>
<organism>
    <name type="scientific">Helicobacter pylori (strain Shi470)</name>
    <dbReference type="NCBI Taxonomy" id="512562"/>
    <lineage>
        <taxon>Bacteria</taxon>
        <taxon>Pseudomonadati</taxon>
        <taxon>Campylobacterota</taxon>
        <taxon>Epsilonproteobacteria</taxon>
        <taxon>Campylobacterales</taxon>
        <taxon>Helicobacteraceae</taxon>
        <taxon>Helicobacter</taxon>
    </lineage>
</organism>
<keyword id="KW-0687">Ribonucleoprotein</keyword>
<keyword id="KW-0689">Ribosomal protein</keyword>
<reference key="1">
    <citation type="submission" date="2008-05" db="EMBL/GenBank/DDBJ databases">
        <title>Genome sequence of Helicobacter pylori from the remote Amazon: traces of Asian ancestry of the first Americans.</title>
        <authorList>
            <person name="Kersulyte D."/>
            <person name="Kalia A."/>
            <person name="Gilman R.H."/>
            <person name="Berg D.E."/>
        </authorList>
    </citation>
    <scope>NUCLEOTIDE SEQUENCE [LARGE SCALE GENOMIC DNA]</scope>
    <source>
        <strain>Shi470</strain>
    </source>
</reference>